<dbReference type="EC" id="3.6.4.13" evidence="10"/>
<dbReference type="EMBL" id="CM007647">
    <property type="protein sequence ID" value="ONM11072.1"/>
    <property type="molecule type" value="Genomic_DNA"/>
</dbReference>
<dbReference type="EMBL" id="EU955721">
    <property type="protein sequence ID" value="ACG27839.1"/>
    <property type="molecule type" value="mRNA"/>
</dbReference>
<dbReference type="EMBL" id="BT033962">
    <property type="protein sequence ID" value="ACF78967.1"/>
    <property type="status" value="ALT_INIT"/>
    <property type="molecule type" value="mRNA"/>
</dbReference>
<dbReference type="RefSeq" id="NP_001130659.1">
    <property type="nucleotide sequence ID" value="NM_001137187.1"/>
</dbReference>
<dbReference type="RefSeq" id="XP_008671379.1">
    <property type="nucleotide sequence ID" value="XM_008673157.1"/>
</dbReference>
<dbReference type="SMR" id="A0A1D6LAB7"/>
<dbReference type="FunCoup" id="A0A1D6LAB7">
    <property type="interactions" value="1161"/>
</dbReference>
<dbReference type="STRING" id="4577.A0A1D6LAB7"/>
<dbReference type="PaxDb" id="4577-AC198418.3_FGP005"/>
<dbReference type="EnsemblPlants" id="Zm00001eb063300_T001">
    <property type="protein sequence ID" value="Zm00001eb063300_P001"/>
    <property type="gene ID" value="Zm00001eb063300"/>
</dbReference>
<dbReference type="GeneID" id="100191761"/>
<dbReference type="Gramene" id="Zm00001eb063300_T001">
    <property type="protein sequence ID" value="Zm00001eb063300_P001"/>
    <property type="gene ID" value="Zm00001eb063300"/>
</dbReference>
<dbReference type="KEGG" id="zma:100191761"/>
<dbReference type="eggNOG" id="KOG0331">
    <property type="taxonomic scope" value="Eukaryota"/>
</dbReference>
<dbReference type="InParanoid" id="A0A1D6LAB7"/>
<dbReference type="OMA" id="IQYFIPA"/>
<dbReference type="OrthoDB" id="4255at2759"/>
<dbReference type="Proteomes" id="UP000007305">
    <property type="component" value="Chromosome 1"/>
</dbReference>
<dbReference type="ExpressionAtlas" id="A0A1D6LAB7">
    <property type="expression patterns" value="baseline and differential"/>
</dbReference>
<dbReference type="GO" id="GO:0009570">
    <property type="term" value="C:chloroplast stroma"/>
    <property type="evidence" value="ECO:0000314"/>
    <property type="project" value="UniProtKB"/>
</dbReference>
<dbReference type="GO" id="GO:0005737">
    <property type="term" value="C:cytoplasm"/>
    <property type="evidence" value="ECO:0000318"/>
    <property type="project" value="GO_Central"/>
</dbReference>
<dbReference type="GO" id="GO:0005524">
    <property type="term" value="F:ATP binding"/>
    <property type="evidence" value="ECO:0007669"/>
    <property type="project" value="UniProtKB-KW"/>
</dbReference>
<dbReference type="GO" id="GO:0016887">
    <property type="term" value="F:ATP hydrolysis activity"/>
    <property type="evidence" value="ECO:0007669"/>
    <property type="project" value="RHEA"/>
</dbReference>
<dbReference type="GO" id="GO:0003723">
    <property type="term" value="F:RNA binding"/>
    <property type="evidence" value="ECO:0007669"/>
    <property type="project" value="UniProtKB-KW"/>
</dbReference>
<dbReference type="GO" id="GO:0003724">
    <property type="term" value="F:RNA helicase activity"/>
    <property type="evidence" value="ECO:0007669"/>
    <property type="project" value="UniProtKB-EC"/>
</dbReference>
<dbReference type="GO" id="GO:0008270">
    <property type="term" value="F:zinc ion binding"/>
    <property type="evidence" value="ECO:0007669"/>
    <property type="project" value="UniProtKB-KW"/>
</dbReference>
<dbReference type="GO" id="GO:0009658">
    <property type="term" value="P:chloroplast organization"/>
    <property type="evidence" value="ECO:0000315"/>
    <property type="project" value="UniProtKB"/>
</dbReference>
<dbReference type="GO" id="GO:0000373">
    <property type="term" value="P:Group II intron splicing"/>
    <property type="evidence" value="ECO:0000315"/>
    <property type="project" value="UniProtKB"/>
</dbReference>
<dbReference type="GO" id="GO:0042254">
    <property type="term" value="P:ribosome biogenesis"/>
    <property type="evidence" value="ECO:0000315"/>
    <property type="project" value="UniProtKB"/>
</dbReference>
<dbReference type="CDD" id="cd00268">
    <property type="entry name" value="DEADc"/>
    <property type="match status" value="1"/>
</dbReference>
<dbReference type="CDD" id="cd12938">
    <property type="entry name" value="GUCT_Hera"/>
    <property type="match status" value="1"/>
</dbReference>
<dbReference type="CDD" id="cd18787">
    <property type="entry name" value="SF2_C_DEAD"/>
    <property type="match status" value="1"/>
</dbReference>
<dbReference type="FunFam" id="4.10.60.10:FF:000037">
    <property type="entry name" value="DEAD-box ATP-dependent RNA helicase 3, chloroplastic"/>
    <property type="match status" value="1"/>
</dbReference>
<dbReference type="FunFam" id="3.40.50.300:FF:001840">
    <property type="entry name" value="DEAD-box ATP-dependent RNA helicase 3B, chloroplastic"/>
    <property type="match status" value="1"/>
</dbReference>
<dbReference type="FunFam" id="3.40.50.300:FF:000911">
    <property type="entry name" value="Nucleolar RNA helicase II"/>
    <property type="match status" value="1"/>
</dbReference>
<dbReference type="Gene3D" id="3.40.50.300">
    <property type="entry name" value="P-loop containing nucleotide triphosphate hydrolases"/>
    <property type="match status" value="2"/>
</dbReference>
<dbReference type="Gene3D" id="4.10.60.10">
    <property type="entry name" value="Zinc finger, CCHC-type"/>
    <property type="match status" value="1"/>
</dbReference>
<dbReference type="InterPro" id="IPR011545">
    <property type="entry name" value="DEAD/DEAH_box_helicase_dom"/>
</dbReference>
<dbReference type="InterPro" id="IPR050079">
    <property type="entry name" value="DEAD_box_RNA_helicase"/>
</dbReference>
<dbReference type="InterPro" id="IPR012562">
    <property type="entry name" value="GUCT"/>
</dbReference>
<dbReference type="InterPro" id="IPR014001">
    <property type="entry name" value="Helicase_ATP-bd"/>
</dbReference>
<dbReference type="InterPro" id="IPR001650">
    <property type="entry name" value="Helicase_C-like"/>
</dbReference>
<dbReference type="InterPro" id="IPR027417">
    <property type="entry name" value="P-loop_NTPase"/>
</dbReference>
<dbReference type="InterPro" id="IPR014014">
    <property type="entry name" value="RNA_helicase_DEAD_Q_motif"/>
</dbReference>
<dbReference type="InterPro" id="IPR001878">
    <property type="entry name" value="Znf_CCHC"/>
</dbReference>
<dbReference type="InterPro" id="IPR036875">
    <property type="entry name" value="Znf_CCHC_sf"/>
</dbReference>
<dbReference type="PANTHER" id="PTHR47959:SF1">
    <property type="entry name" value="ATP-DEPENDENT RNA HELICASE DBPA"/>
    <property type="match status" value="1"/>
</dbReference>
<dbReference type="PANTHER" id="PTHR47959">
    <property type="entry name" value="ATP-DEPENDENT RNA HELICASE RHLE-RELATED"/>
    <property type="match status" value="1"/>
</dbReference>
<dbReference type="Pfam" id="PF00270">
    <property type="entry name" value="DEAD"/>
    <property type="match status" value="1"/>
</dbReference>
<dbReference type="Pfam" id="PF08152">
    <property type="entry name" value="GUCT"/>
    <property type="match status" value="1"/>
</dbReference>
<dbReference type="Pfam" id="PF00271">
    <property type="entry name" value="Helicase_C"/>
    <property type="match status" value="1"/>
</dbReference>
<dbReference type="Pfam" id="PF00098">
    <property type="entry name" value="zf-CCHC"/>
    <property type="match status" value="1"/>
</dbReference>
<dbReference type="SMART" id="SM00487">
    <property type="entry name" value="DEXDc"/>
    <property type="match status" value="1"/>
</dbReference>
<dbReference type="SMART" id="SM00490">
    <property type="entry name" value="HELICc"/>
    <property type="match status" value="1"/>
</dbReference>
<dbReference type="SMART" id="SM00343">
    <property type="entry name" value="ZnF_C2HC"/>
    <property type="match status" value="1"/>
</dbReference>
<dbReference type="SUPFAM" id="SSF52540">
    <property type="entry name" value="P-loop containing nucleoside triphosphate hydrolases"/>
    <property type="match status" value="1"/>
</dbReference>
<dbReference type="SUPFAM" id="SSF57756">
    <property type="entry name" value="Retrovirus zinc finger-like domains"/>
    <property type="match status" value="1"/>
</dbReference>
<dbReference type="PROSITE" id="PS51192">
    <property type="entry name" value="HELICASE_ATP_BIND_1"/>
    <property type="match status" value="1"/>
</dbReference>
<dbReference type="PROSITE" id="PS51194">
    <property type="entry name" value="HELICASE_CTER"/>
    <property type="match status" value="1"/>
</dbReference>
<dbReference type="PROSITE" id="PS51195">
    <property type="entry name" value="Q_MOTIF"/>
    <property type="match status" value="1"/>
</dbReference>
<dbReference type="PROSITE" id="PS50158">
    <property type="entry name" value="ZF_CCHC"/>
    <property type="match status" value="1"/>
</dbReference>
<protein>
    <recommendedName>
        <fullName evidence="10">DEAD-box ATP-dependent RNA helicase 3B, chloroplastic</fullName>
        <shortName evidence="9">ZmRH3B</shortName>
        <ecNumber evidence="10">3.6.4.13</ecNumber>
    </recommendedName>
</protein>
<evidence type="ECO:0000255" key="1"/>
<evidence type="ECO:0000255" key="2">
    <source>
        <dbReference type="PROSITE-ProRule" id="PRU00047"/>
    </source>
</evidence>
<evidence type="ECO:0000255" key="3">
    <source>
        <dbReference type="PROSITE-ProRule" id="PRU00541"/>
    </source>
</evidence>
<evidence type="ECO:0000255" key="4">
    <source>
        <dbReference type="PROSITE-ProRule" id="PRU00542"/>
    </source>
</evidence>
<evidence type="ECO:0000255" key="5">
    <source>
        <dbReference type="PROSITE-ProRule" id="PRU00552"/>
    </source>
</evidence>
<evidence type="ECO:0000256" key="6">
    <source>
        <dbReference type="SAM" id="MobiDB-lite"/>
    </source>
</evidence>
<evidence type="ECO:0000269" key="7">
    <source>
    </source>
</evidence>
<evidence type="ECO:0000269" key="8">
    <source>
    </source>
</evidence>
<evidence type="ECO:0000303" key="9">
    <source>
    </source>
</evidence>
<evidence type="ECO:0000305" key="10"/>
<evidence type="ECO:0000312" key="11">
    <source>
        <dbReference type="EMBL" id="ONM11072.1"/>
    </source>
</evidence>
<keyword id="KW-0067">ATP-binding</keyword>
<keyword id="KW-0150">Chloroplast</keyword>
<keyword id="KW-0347">Helicase</keyword>
<keyword id="KW-0378">Hydrolase</keyword>
<keyword id="KW-0479">Metal-binding</keyword>
<keyword id="KW-0547">Nucleotide-binding</keyword>
<keyword id="KW-0934">Plastid</keyword>
<keyword id="KW-1185">Reference proteome</keyword>
<keyword id="KW-0690">Ribosome biogenesis</keyword>
<keyword id="KW-0694">RNA-binding</keyword>
<keyword id="KW-0809">Transit peptide</keyword>
<keyword id="KW-0862">Zinc</keyword>
<keyword id="KW-0863">Zinc-finger</keyword>
<sequence length="743" mass="80171">MASLTLPALALALSNPGAVRLRAAAFRCWALRRRGWAAAGALASPNSVLSEHAFKRLQLGSDDEDGEGPYGSDADEGFEAGEGDNEELAIARLGLPDELVATLEKRGITHLFPIQRAVLIPALEGRDLIARAKTGTGKTLAFGIPMIKQLIEQDDGRITRRGRTPRVLVLAPTRELAKQVEKEIKESAPKLGTVCVYGGVSYNVQQNALSRGVDVVVGTPGRIIDLINGGSLQLGEVQYLVLDEADQMLAVGFEEDVETILQQLPAGRQSMLFSATMPSWVKKLSRRYLNNPLTIDLVGDQDEKLAEGIKLYAIPLTTTSKRTVLSDLITVYAKGGKTIVFTRTKKDADEVSLALTNSIASEALHGDISQHQRERTLNGFRQGKFTVLVATDVAARGLDIPNVDLIIHYELPNDPETFVHRSGRTGRAGKAGTAILMFTSSQKRTVKSLERDVGCNFEFISPPSIEEVLESSAEHVIATLRGVHPESTKYFLGAAEKLTEELGPHALASALAHLSGFSQPPSSRSLISHEQGWVTLQLTREQGFGRGFFSPRSVTGFLSDVCSAAADEVGKIYLTADENVQGAVFDLPEEIAKDLLTMELPPGNTLTKISKLPALQDDGPATDSYGRFSNDRGSRNNRRSRGGGASRGRGGWDTDGEDRFRRGGRSLRSDNDSWSDDDWSGGGRKSNRSSSFGSRSSSYSSRGSPSFGGRSSSFGGRESNRSFSGACFNCGESGHRATDCPNK</sequence>
<comment type="function">
    <text evidence="7">Nuclear genome-encoded factor involved in ribosome biogenesis in chloroplasts. Binds specific group II introns in chloroplasts and facilitates their splicing. Is required for rRNA maturation in plastids and may contribute to the assembly of the large (50S) ribosomal subunit. Required for normal development of chloroplasts.</text>
</comment>
<comment type="catalytic activity">
    <reaction evidence="10">
        <text>ATP + H2O = ADP + phosphate + H(+)</text>
        <dbReference type="Rhea" id="RHEA:13065"/>
        <dbReference type="ChEBI" id="CHEBI:15377"/>
        <dbReference type="ChEBI" id="CHEBI:15378"/>
        <dbReference type="ChEBI" id="CHEBI:30616"/>
        <dbReference type="ChEBI" id="CHEBI:43474"/>
        <dbReference type="ChEBI" id="CHEBI:456216"/>
        <dbReference type="EC" id="3.6.4.13"/>
    </reaction>
</comment>
<comment type="subcellular location">
    <subcellularLocation>
        <location evidence="7">Plastid</location>
        <location evidence="7">Chloroplast stroma</location>
    </subcellularLocation>
</comment>
<comment type="domain">
    <text evidence="10">The Q motif is unique to and characteristic of the DEAD box family of RNA helicases and controls ATP binding and hydrolysis.</text>
</comment>
<comment type="disruption phenotype">
    <text evidence="8">Very pale yellow green leaf phenotype. Virescent leaf phenotype.</text>
</comment>
<comment type="similarity">
    <text evidence="10">Belongs to the DEAD box helicase family. DDX21/DDX50 subfamily.</text>
</comment>
<comment type="sequence caution" evidence="10">
    <conflict type="erroneous initiation">
        <sequence resource="EMBL-CDS" id="ACF78967"/>
    </conflict>
    <text>Truncated N-terminus.</text>
</comment>
<gene>
    <name evidence="9" type="primary">RH3B</name>
    <name evidence="11" type="ORF">ZEAMMB73_Zm00001d034721</name>
</gene>
<feature type="transit peptide" description="Chloroplast" evidence="1">
    <location>
        <begin position="1"/>
        <end position="37"/>
    </location>
</feature>
<feature type="chain" id="PRO_0000441333" description="DEAD-box ATP-dependent RNA helicase 3B, chloroplastic">
    <location>
        <begin position="38"/>
        <end position="743"/>
    </location>
</feature>
<feature type="domain" description="Helicase ATP-binding" evidence="3">
    <location>
        <begin position="119"/>
        <end position="295"/>
    </location>
</feature>
<feature type="domain" description="Helicase C-terminal" evidence="4">
    <location>
        <begin position="324"/>
        <end position="469"/>
    </location>
</feature>
<feature type="zinc finger region" description="CCHC-type" evidence="2">
    <location>
        <begin position="725"/>
        <end position="742"/>
    </location>
</feature>
<feature type="region of interest" description="Disordered" evidence="6">
    <location>
        <begin position="60"/>
        <end position="79"/>
    </location>
</feature>
<feature type="region of interest" description="Disordered" evidence="6">
    <location>
        <begin position="606"/>
        <end position="719"/>
    </location>
</feature>
<feature type="short sequence motif" description="Q motif" evidence="5">
    <location>
        <begin position="88"/>
        <end position="116"/>
    </location>
</feature>
<feature type="short sequence motif" description="DEAD box" evidence="3">
    <location>
        <begin position="243"/>
        <end position="246"/>
    </location>
</feature>
<feature type="compositionally biased region" description="Acidic residues" evidence="6">
    <location>
        <begin position="61"/>
        <end position="79"/>
    </location>
</feature>
<feature type="compositionally biased region" description="Gly residues" evidence="6">
    <location>
        <begin position="642"/>
        <end position="653"/>
    </location>
</feature>
<feature type="compositionally biased region" description="Basic and acidic residues" evidence="6">
    <location>
        <begin position="657"/>
        <end position="671"/>
    </location>
</feature>
<feature type="compositionally biased region" description="Low complexity" evidence="6">
    <location>
        <begin position="688"/>
        <end position="719"/>
    </location>
</feature>
<feature type="binding site" evidence="3">
    <location>
        <begin position="132"/>
        <end position="139"/>
    </location>
    <ligand>
        <name>ATP</name>
        <dbReference type="ChEBI" id="CHEBI:30616"/>
    </ligand>
</feature>
<feature type="sequence conflict" description="In Ref. 2; ACG27839." evidence="10" ref="2">
    <original>T</original>
    <variation>A</variation>
    <location>
        <position position="318"/>
    </location>
</feature>
<feature type="sequence conflict" description="In Ref. 2; ACG27839." evidence="10" ref="2">
    <original>R</original>
    <variation>RS</variation>
    <location>
        <position position="695"/>
    </location>
</feature>
<feature type="sequence conflict" description="In Ref. 2; ACG27839." evidence="10" ref="2">
    <original>G</original>
    <variation>S</variation>
    <location>
        <position position="716"/>
    </location>
</feature>
<organism>
    <name type="scientific">Zea mays</name>
    <name type="common">Maize</name>
    <dbReference type="NCBI Taxonomy" id="4577"/>
    <lineage>
        <taxon>Eukaryota</taxon>
        <taxon>Viridiplantae</taxon>
        <taxon>Streptophyta</taxon>
        <taxon>Embryophyta</taxon>
        <taxon>Tracheophyta</taxon>
        <taxon>Spermatophyta</taxon>
        <taxon>Magnoliopsida</taxon>
        <taxon>Liliopsida</taxon>
        <taxon>Poales</taxon>
        <taxon>Poaceae</taxon>
        <taxon>PACMAD clade</taxon>
        <taxon>Panicoideae</taxon>
        <taxon>Andropogonodae</taxon>
        <taxon>Andropogoneae</taxon>
        <taxon>Tripsacinae</taxon>
        <taxon>Zea</taxon>
    </lineage>
</organism>
<reference key="1">
    <citation type="journal article" date="2009" name="Science">
        <title>The B73 maize genome: complexity, diversity, and dynamics.</title>
        <authorList>
            <person name="Schnable P.S."/>
            <person name="Ware D."/>
            <person name="Fulton R.S."/>
            <person name="Stein J.C."/>
            <person name="Wei F."/>
            <person name="Pasternak S."/>
            <person name="Liang C."/>
            <person name="Zhang J."/>
            <person name="Fulton L."/>
            <person name="Graves T.A."/>
            <person name="Minx P."/>
            <person name="Reily A.D."/>
            <person name="Courtney L."/>
            <person name="Kruchowski S.S."/>
            <person name="Tomlinson C."/>
            <person name="Strong C."/>
            <person name="Delehaunty K."/>
            <person name="Fronick C."/>
            <person name="Courtney B."/>
            <person name="Rock S.M."/>
            <person name="Belter E."/>
            <person name="Du F."/>
            <person name="Kim K."/>
            <person name="Abbott R.M."/>
            <person name="Cotton M."/>
            <person name="Levy A."/>
            <person name="Marchetto P."/>
            <person name="Ochoa K."/>
            <person name="Jackson S.M."/>
            <person name="Gillam B."/>
            <person name="Chen W."/>
            <person name="Yan L."/>
            <person name="Higginbotham J."/>
            <person name="Cardenas M."/>
            <person name="Waligorski J."/>
            <person name="Applebaum E."/>
            <person name="Phelps L."/>
            <person name="Falcone J."/>
            <person name="Kanchi K."/>
            <person name="Thane T."/>
            <person name="Scimone A."/>
            <person name="Thane N."/>
            <person name="Henke J."/>
            <person name="Wang T."/>
            <person name="Ruppert J."/>
            <person name="Shah N."/>
            <person name="Rotter K."/>
            <person name="Hodges J."/>
            <person name="Ingenthron E."/>
            <person name="Cordes M."/>
            <person name="Kohlberg S."/>
            <person name="Sgro J."/>
            <person name="Delgado B."/>
            <person name="Mead K."/>
            <person name="Chinwalla A."/>
            <person name="Leonard S."/>
            <person name="Crouse K."/>
            <person name="Collura K."/>
            <person name="Kudrna D."/>
            <person name="Currie J."/>
            <person name="He R."/>
            <person name="Angelova A."/>
            <person name="Rajasekar S."/>
            <person name="Mueller T."/>
            <person name="Lomeli R."/>
            <person name="Scara G."/>
            <person name="Ko A."/>
            <person name="Delaney K."/>
            <person name="Wissotski M."/>
            <person name="Lopez G."/>
            <person name="Campos D."/>
            <person name="Braidotti M."/>
            <person name="Ashley E."/>
            <person name="Golser W."/>
            <person name="Kim H."/>
            <person name="Lee S."/>
            <person name="Lin J."/>
            <person name="Dujmic Z."/>
            <person name="Kim W."/>
            <person name="Talag J."/>
            <person name="Zuccolo A."/>
            <person name="Fan C."/>
            <person name="Sebastian A."/>
            <person name="Kramer M."/>
            <person name="Spiegel L."/>
            <person name="Nascimento L."/>
            <person name="Zutavern T."/>
            <person name="Miller B."/>
            <person name="Ambroise C."/>
            <person name="Muller S."/>
            <person name="Spooner W."/>
            <person name="Narechania A."/>
            <person name="Ren L."/>
            <person name="Wei S."/>
            <person name="Kumari S."/>
            <person name="Faga B."/>
            <person name="Levy M.J."/>
            <person name="McMahan L."/>
            <person name="Van Buren P."/>
            <person name="Vaughn M.W."/>
            <person name="Ying K."/>
            <person name="Yeh C.-T."/>
            <person name="Emrich S.J."/>
            <person name="Jia Y."/>
            <person name="Kalyanaraman A."/>
            <person name="Hsia A.-P."/>
            <person name="Barbazuk W.B."/>
            <person name="Baucom R.S."/>
            <person name="Brutnell T.P."/>
            <person name="Carpita N.C."/>
            <person name="Chaparro C."/>
            <person name="Chia J.-M."/>
            <person name="Deragon J.-M."/>
            <person name="Estill J.C."/>
            <person name="Fu Y."/>
            <person name="Jeddeloh J.A."/>
            <person name="Han Y."/>
            <person name="Lee H."/>
            <person name="Li P."/>
            <person name="Lisch D.R."/>
            <person name="Liu S."/>
            <person name="Liu Z."/>
            <person name="Nagel D.H."/>
            <person name="McCann M.C."/>
            <person name="SanMiguel P."/>
            <person name="Myers A.M."/>
            <person name="Nettleton D."/>
            <person name="Nguyen J."/>
            <person name="Penning B.W."/>
            <person name="Ponnala L."/>
            <person name="Schneider K.L."/>
            <person name="Schwartz D.C."/>
            <person name="Sharma A."/>
            <person name="Soderlund C."/>
            <person name="Springer N.M."/>
            <person name="Sun Q."/>
            <person name="Wang H."/>
            <person name="Waterman M."/>
            <person name="Westerman R."/>
            <person name="Wolfgruber T.K."/>
            <person name="Yang L."/>
            <person name="Yu Y."/>
            <person name="Zhang L."/>
            <person name="Zhou S."/>
            <person name="Zhu Q."/>
            <person name="Bennetzen J.L."/>
            <person name="Dawe R.K."/>
            <person name="Jiang J."/>
            <person name="Jiang N."/>
            <person name="Presting G.G."/>
            <person name="Wessler S.R."/>
            <person name="Aluru S."/>
            <person name="Martienssen R.A."/>
            <person name="Clifton S.W."/>
            <person name="McCombie W.R."/>
            <person name="Wing R.A."/>
            <person name="Wilson R.K."/>
        </authorList>
    </citation>
    <scope>NUCLEOTIDE SEQUENCE [LARGE SCALE GENOMIC DNA]</scope>
    <source>
        <strain>cv. B73</strain>
    </source>
</reference>
<reference key="2">
    <citation type="journal article" date="2009" name="Plant Mol. Biol.">
        <title>Insights into corn genes derived from large-scale cDNA sequencing.</title>
        <authorList>
            <person name="Alexandrov N.N."/>
            <person name="Brover V.V."/>
            <person name="Freidin S."/>
            <person name="Troukhan M.E."/>
            <person name="Tatarinova T.V."/>
            <person name="Zhang H."/>
            <person name="Swaller T.J."/>
            <person name="Lu Y.-P."/>
            <person name="Bouck J."/>
            <person name="Flavell R.B."/>
            <person name="Feldmann K.A."/>
        </authorList>
    </citation>
    <scope>NUCLEOTIDE SEQUENCE [LARGE SCALE MRNA]</scope>
</reference>
<reference key="3">
    <citation type="journal article" date="2009" name="PLoS Genet.">
        <title>Sequencing, mapping, and analysis of 27,455 maize full-length cDNAs.</title>
        <authorList>
            <person name="Soderlund C."/>
            <person name="Descour A."/>
            <person name="Kudrna D."/>
            <person name="Bomhoff M."/>
            <person name="Boyd L."/>
            <person name="Currie J."/>
            <person name="Angelova A."/>
            <person name="Collura K."/>
            <person name="Wissotski M."/>
            <person name="Ashley E."/>
            <person name="Morrow D."/>
            <person name="Fernandes J."/>
            <person name="Walbot V."/>
            <person name="Yu Y."/>
        </authorList>
    </citation>
    <scope>NUCLEOTIDE SEQUENCE [LARGE SCALE MRNA] OF 10-743</scope>
    <source>
        <strain>cv. B73</strain>
    </source>
</reference>
<reference key="4">
    <citation type="journal article" date="2012" name="Plant Physiol.">
        <title>Chloroplast RH3 DEAD box RNA helicases in maize and Arabidopsis function in splicing of specific group II introns and affect chloroplast ribosome biogenesis.</title>
        <authorList>
            <person name="Asakura Y."/>
            <person name="Galarneau E."/>
            <person name="Watkins K.P."/>
            <person name="Barkan A."/>
            <person name="van Wijk K.J."/>
        </authorList>
    </citation>
    <scope>FUNCTION</scope>
    <scope>SUBCELLULAR LOCATION</scope>
</reference>
<reference key="5">
    <citation type="journal article" date="2015" name="Biochim. Biophys. Acta">
        <title>Large-scale genetic analysis of chloroplast biogenesis in maize.</title>
        <authorList>
            <person name="Belcher S."/>
            <person name="Williams-Carrier R."/>
            <person name="Stiffler N."/>
            <person name="Barkan A."/>
        </authorList>
    </citation>
    <scope>DISRUPTION PHENOTYPE</scope>
</reference>
<proteinExistence type="evidence at transcript level"/>
<accession>A0A1D6LAB7</accession>
<accession>B4FA24</accession>
<accession>B6SSK6</accession>
<name>RH3B_MAIZE</name>